<gene>
    <name type="primary">BJSP-2</name>
</gene>
<feature type="signal peptide" evidence="1">
    <location>
        <begin position="1"/>
        <end position="14"/>
    </location>
</feature>
<feature type="chain" id="PRO_0000013344" description="Basic juvenile hormone-suppressible protein 2">
    <location>
        <begin position="15"/>
        <end position="749"/>
    </location>
</feature>
<protein>
    <recommendedName>
        <fullName>Basic juvenile hormone-suppressible protein 2</fullName>
        <shortName>BJHSP2</shortName>
    </recommendedName>
</protein>
<name>BJSB2_TRINI</name>
<organism>
    <name type="scientific">Trichoplusia ni</name>
    <name type="common">Cabbage looper</name>
    <dbReference type="NCBI Taxonomy" id="7111"/>
    <lineage>
        <taxon>Eukaryota</taxon>
        <taxon>Metazoa</taxon>
        <taxon>Ecdysozoa</taxon>
        <taxon>Arthropoda</taxon>
        <taxon>Hexapoda</taxon>
        <taxon>Insecta</taxon>
        <taxon>Pterygota</taxon>
        <taxon>Neoptera</taxon>
        <taxon>Endopterygota</taxon>
        <taxon>Lepidoptera</taxon>
        <taxon>Glossata</taxon>
        <taxon>Ditrysia</taxon>
        <taxon>Noctuoidea</taxon>
        <taxon>Noctuidae</taxon>
        <taxon>Plusiinae</taxon>
        <taxon>Trichoplusia</taxon>
    </lineage>
</organism>
<reference key="1">
    <citation type="journal article" date="1993" name="J. Biol. Chem.">
        <title>Hormonal regulation and properties of a new group of basic hemolymph proteins expressed during insect metamorphosis.</title>
        <authorList>
            <person name="Jones G."/>
            <person name="Manczak M."/>
            <person name="Horn M."/>
        </authorList>
    </citation>
    <scope>NUCLEOTIDE SEQUENCE [MRNA]</scope>
    <scope>PROTEIN SEQUENCE OF 15-32</scope>
</reference>
<accession>Q06343</accession>
<dbReference type="EMBL" id="L03281">
    <property type="protein sequence ID" value="AAA27883.1"/>
    <property type="status" value="ALT_SEQ"/>
    <property type="molecule type" value="mRNA"/>
</dbReference>
<dbReference type="PIR" id="A45046">
    <property type="entry name" value="A45046"/>
</dbReference>
<dbReference type="SMR" id="Q06343"/>
<dbReference type="FunCoup" id="Q06343">
    <property type="interactions" value="8"/>
</dbReference>
<dbReference type="InParanoid" id="Q06343"/>
<dbReference type="Proteomes" id="UP000322000">
    <property type="component" value="Unplaced"/>
</dbReference>
<dbReference type="GO" id="GO:0045735">
    <property type="term" value="F:nutrient reservoir activity"/>
    <property type="evidence" value="ECO:0007669"/>
    <property type="project" value="UniProtKB-KW"/>
</dbReference>
<dbReference type="Gene3D" id="1.10.1280.10">
    <property type="entry name" value="Di-copper center containing domain from catechol oxidase"/>
    <property type="match status" value="1"/>
</dbReference>
<dbReference type="Gene3D" id="2.60.40.1520">
    <property type="entry name" value="Hemocyanin, C-terminal domain"/>
    <property type="match status" value="1"/>
</dbReference>
<dbReference type="Gene3D" id="1.20.1370.10">
    <property type="entry name" value="Hemocyanin, N-terminal domain"/>
    <property type="match status" value="1"/>
</dbReference>
<dbReference type="InterPro" id="IPR008922">
    <property type="entry name" value="Di-copper_centre_dom_sf"/>
</dbReference>
<dbReference type="InterPro" id="IPR013788">
    <property type="entry name" value="Hemocyanin/hexamerin"/>
</dbReference>
<dbReference type="InterPro" id="IPR000896">
    <property type="entry name" value="Hemocyanin/hexamerin_mid_dom"/>
</dbReference>
<dbReference type="InterPro" id="IPR005203">
    <property type="entry name" value="Hemocyanin_C"/>
</dbReference>
<dbReference type="InterPro" id="IPR037020">
    <property type="entry name" value="Hemocyanin_C_sf"/>
</dbReference>
<dbReference type="InterPro" id="IPR005204">
    <property type="entry name" value="Hemocyanin_N"/>
</dbReference>
<dbReference type="InterPro" id="IPR036697">
    <property type="entry name" value="Hemocyanin_N_sf"/>
</dbReference>
<dbReference type="InterPro" id="IPR014756">
    <property type="entry name" value="Ig_E-set"/>
</dbReference>
<dbReference type="PANTHER" id="PTHR11511:SF5">
    <property type="entry name" value="FAT-BODY PROTEIN 1-RELATED"/>
    <property type="match status" value="1"/>
</dbReference>
<dbReference type="PANTHER" id="PTHR11511">
    <property type="entry name" value="LARVAL STORAGE PROTEIN/PHENOLOXIDASE"/>
    <property type="match status" value="1"/>
</dbReference>
<dbReference type="Pfam" id="PF03723">
    <property type="entry name" value="Hemocyanin_C"/>
    <property type="match status" value="1"/>
</dbReference>
<dbReference type="Pfam" id="PF00372">
    <property type="entry name" value="Hemocyanin_M"/>
    <property type="match status" value="1"/>
</dbReference>
<dbReference type="Pfam" id="PF03722">
    <property type="entry name" value="Hemocyanin_N"/>
    <property type="match status" value="1"/>
</dbReference>
<dbReference type="PRINTS" id="PR00187">
    <property type="entry name" value="HAEMOCYANIN"/>
</dbReference>
<dbReference type="SUPFAM" id="SSF48056">
    <property type="entry name" value="Di-copper centre-containing domain"/>
    <property type="match status" value="1"/>
</dbReference>
<dbReference type="SUPFAM" id="SSF81296">
    <property type="entry name" value="E set domains"/>
    <property type="match status" value="1"/>
</dbReference>
<dbReference type="SUPFAM" id="SSF48050">
    <property type="entry name" value="Hemocyanin, N-terminal domain"/>
    <property type="match status" value="1"/>
</dbReference>
<dbReference type="PROSITE" id="PS00209">
    <property type="entry name" value="HEMOCYANIN_1"/>
    <property type="match status" value="1"/>
</dbReference>
<dbReference type="PROSITE" id="PS00210">
    <property type="entry name" value="HEMOCYANIN_2"/>
    <property type="match status" value="1"/>
</dbReference>
<sequence>MRAVLLFVVSLAALRMARPEIDDTTLVTMDIKQRQLVILKLLNHVVEPLMYKDLEELGKNFKIEENTDLFTKTDVLKDFIKMRKVGFLPRGEIFTLHVDRQLKEVVTMFHMLYYAKDFTTFVKTACWMRLYLNEGMFVYALTVAVRHREDCKGIILPPPYEIYPYYFVRADVIQKAYLLKMKKGLLDLKLCDFYGIKKTDKDVFIIDENVYDKRVHLNKEDKLRYFTEDIDLNTYYFYFHVDYPFWMKDKFMDKMKMRRFELTYIMYQQILARYILERLSNGMGMIKDLSWHKTIKKGYWPWMKLHNGVEIPVRFDNYVIVRDHNRDVIRLCDEYERIIRDAIIKGFIEINGMRLELTKTDDIETLGKLIFGKIDKVDLDKTLVDSYRYLLIVMKAALGLNTFHSDKYFVVPSILDQYQTALRDPVFYMLQKRIIDLVHLFKLRLPSYTKEDLYFPGVKIDNVVVDKLVTYFDDYLMDMTNAVYLTEDEIKKTKSDMVFMVRKRRLNHQPFKVTLDILSDKSVDCVVRVFLGPKKDNLNRLIDINRNRLNFVELDTFLYKLNTGKNTIVRNSYDMHNLVKDRMMTRDFMKKVESITDMRDLMIKDLRNYHTGFPTRLLLPKGFVGGMHMMLYVIVTPLRLVDNVDINILDINRKDLMRDFRSTVLLDKMPLGFPFDRRIDVGNFFTPNMKFVEVTIFHKRMTCDMKTRWNRWVLKDYDMVDRTRIESDSYFVDTDLDMKVNRNVNLIDV</sequence>
<proteinExistence type="evidence at protein level"/>
<evidence type="ECO:0000255" key="1"/>
<evidence type="ECO:0000305" key="2"/>
<comment type="tissue specificity">
    <text>Fat body, and hemolymph of larvae.</text>
</comment>
<comment type="developmental stage">
    <text>Appears in increasing abundance on days 2 and 3 of the final metamorphic larval stadium and then declines to a very low level during day 4 prepupal stage.</text>
</comment>
<comment type="induction">
    <text>Suppressed by juvenile hormone.</text>
</comment>
<comment type="similarity">
    <text evidence="2">Belongs to the hemocyanin family.</text>
</comment>
<keyword id="KW-0903">Direct protein sequencing</keyword>
<keyword id="KW-1185">Reference proteome</keyword>
<keyword id="KW-0732">Signal</keyword>
<keyword id="KW-0758">Storage protein</keyword>